<evidence type="ECO:0000255" key="1"/>
<evidence type="ECO:0000269" key="2">
    <source>
    </source>
</evidence>
<evidence type="ECO:0000269" key="3">
    <source>
    </source>
</evidence>
<evidence type="ECO:0000305" key="4"/>
<comment type="function">
    <text>Part of the ABC transporter complex YxdLM which could be involved in peptide resistance.</text>
</comment>
<comment type="subunit">
    <text evidence="4">The complex is composed of two ATP-binding proteins (YxdL) and two transmembrane proteins (YxdM).</text>
</comment>
<comment type="subcellular location">
    <subcellularLocation>
        <location evidence="4">Cell membrane</location>
        <topology evidence="4">Multi-pass membrane protein</topology>
    </subcellularLocation>
</comment>
<comment type="induction">
    <text evidence="2 3">Transcriptionally regulated by YxdJ. Induced by the antibacterial protein LL-37, probably via YxdJ.</text>
</comment>
<comment type="similarity">
    <text evidence="4">Belongs to the ABC-4 integral membrane protein family.</text>
</comment>
<proteinExistence type="evidence at transcript level"/>
<accession>P42424</accession>
<name>YXDM_BACSU</name>
<keyword id="KW-1003">Cell membrane</keyword>
<keyword id="KW-0472">Membrane</keyword>
<keyword id="KW-1185">Reference proteome</keyword>
<keyword id="KW-0812">Transmembrane</keyword>
<keyword id="KW-1133">Transmembrane helix</keyword>
<keyword id="KW-0813">Transport</keyword>
<protein>
    <recommendedName>
        <fullName>ABC transporter permease protein YxdM</fullName>
    </recommendedName>
</protein>
<sequence>MTFLQFAYKNVTRNKRAYLAFFLSSAFSVLIFFTFAMFLFHPALKEGYLNNIAKKGLTAAEWMIFVFSFLFVLYSVNAFLKSRNKEFGILLMQGITPGQLRKLITAENMIIGVMSIAAGIIGGFIFSKTFFTVGAYILEMDALPLYMPWKALGITACGFLLLFFFLSQFTILFVRSNTVIKLIKGTGKVKPEPKPSVLLSLFGIACLCGGYGMVLKGNVHGAEPFIILLLTVIGTYFFFSQSSIWILRALKKWKTFYLRGKNIIWVSDLVYRLKDNARLFFIVSIISAVAFTATGVLAMYKSTVGAEESAYEMEYLSYSNNPKEQTHLKDIDHELKTHGFTYTKDKIDVSYVRYQEGETVPPVYMISESDAAKYFHVKVNGLKEDEAVYFPGTYDRNFKNEAPDQLKLLNQKGELSDQKLSVKEVKKPLISLNAIIAVNDQTFDQLKSLGDKASLYGYSYDHWKDSLEISQSLQNEIYGNYIDVHSDFASKAGTYYDTVQLPSLSLFIGLFIAIVFFVAAASFLYFRLFTDLDEDRERYRSLAKIGLSEREMAQSVTIQLAILFFFPFVIAVMHTLFALRTLAVEGYSDVAGPLSLTIGGFFIFQLLFFLAVRSSYLKKMNK</sequence>
<feature type="chain" id="PRO_0000050011" description="ABC transporter permease protein YxdM">
    <location>
        <begin position="1"/>
        <end position="622"/>
    </location>
</feature>
<feature type="transmembrane region" description="Helical" evidence="1">
    <location>
        <begin position="20"/>
        <end position="40"/>
    </location>
</feature>
<feature type="transmembrane region" description="Helical" evidence="1">
    <location>
        <begin position="56"/>
        <end position="76"/>
    </location>
</feature>
<feature type="transmembrane region" description="Helical" evidence="1">
    <location>
        <begin position="118"/>
        <end position="138"/>
    </location>
</feature>
<feature type="transmembrane region" description="Helical" evidence="1">
    <location>
        <begin position="154"/>
        <end position="174"/>
    </location>
</feature>
<feature type="transmembrane region" description="Helical" evidence="1">
    <location>
        <begin position="195"/>
        <end position="215"/>
    </location>
</feature>
<feature type="transmembrane region" description="Helical" evidence="1">
    <location>
        <begin position="219"/>
        <end position="239"/>
    </location>
</feature>
<feature type="transmembrane region" description="Helical" evidence="1">
    <location>
        <begin position="279"/>
        <end position="299"/>
    </location>
</feature>
<feature type="transmembrane region" description="Helical" evidence="1">
    <location>
        <begin position="498"/>
        <end position="518"/>
    </location>
</feature>
<feature type="transmembrane region" description="Helical" evidence="1">
    <location>
        <begin position="558"/>
        <end position="578"/>
    </location>
</feature>
<feature type="transmembrane region" description="Helical" evidence="1">
    <location>
        <begin position="590"/>
        <end position="610"/>
    </location>
</feature>
<feature type="sequence conflict" description="In Ref. 1; BAA08316 and 3; BAA03303." evidence="4" ref="1 3">
    <original>Y</original>
    <variation>I</variation>
    <location>
        <position position="136"/>
    </location>
</feature>
<feature type="sequence conflict" description="In Ref. 1; BAA08316 and 3; BAA03303." evidence="4" ref="1 3">
    <original>G</original>
    <variation>R</variation>
    <location>
        <position position="153"/>
    </location>
</feature>
<feature type="sequence conflict" description="In Ref. 1; BAA08316." evidence="4" ref="1">
    <original>K</original>
    <variation>Q</variation>
    <location>
        <position position="426"/>
    </location>
</feature>
<feature type="sequence conflict" description="In Ref. 1; BAA08316." evidence="4" ref="1">
    <original>AIVFFVAAASFL</original>
    <variation>GNCILCRGTSFS</variation>
    <location>
        <begin position="513"/>
        <end position="524"/>
    </location>
</feature>
<gene>
    <name type="primary">yxdM</name>
    <name type="ordered locus">BSU39630</name>
    <name type="ORF">B65G</name>
</gene>
<reference key="1">
    <citation type="journal article" date="1995" name="DNA Res.">
        <title>Cloning and sequencing of a 23-kb region of the Bacillus subtilis genome between the iol and hut operons.</title>
        <authorList>
            <person name="Yoshida K."/>
            <person name="Fujimyra M."/>
            <person name="Yanai N."/>
            <person name="Fujita Y."/>
        </authorList>
    </citation>
    <scope>NUCLEOTIDE SEQUENCE [GENOMIC DNA]</scope>
    <source>
        <strain>168 / BGSC1A1</strain>
    </source>
</reference>
<reference key="2">
    <citation type="journal article" date="1997" name="Nature">
        <title>The complete genome sequence of the Gram-positive bacterium Bacillus subtilis.</title>
        <authorList>
            <person name="Kunst F."/>
            <person name="Ogasawara N."/>
            <person name="Moszer I."/>
            <person name="Albertini A.M."/>
            <person name="Alloni G."/>
            <person name="Azevedo V."/>
            <person name="Bertero M.G."/>
            <person name="Bessieres P."/>
            <person name="Bolotin A."/>
            <person name="Borchert S."/>
            <person name="Borriss R."/>
            <person name="Boursier L."/>
            <person name="Brans A."/>
            <person name="Braun M."/>
            <person name="Brignell S.C."/>
            <person name="Bron S."/>
            <person name="Brouillet S."/>
            <person name="Bruschi C.V."/>
            <person name="Caldwell B."/>
            <person name="Capuano V."/>
            <person name="Carter N.M."/>
            <person name="Choi S.-K."/>
            <person name="Codani J.-J."/>
            <person name="Connerton I.F."/>
            <person name="Cummings N.J."/>
            <person name="Daniel R.A."/>
            <person name="Denizot F."/>
            <person name="Devine K.M."/>
            <person name="Duesterhoeft A."/>
            <person name="Ehrlich S.D."/>
            <person name="Emmerson P.T."/>
            <person name="Entian K.-D."/>
            <person name="Errington J."/>
            <person name="Fabret C."/>
            <person name="Ferrari E."/>
            <person name="Foulger D."/>
            <person name="Fritz C."/>
            <person name="Fujita M."/>
            <person name="Fujita Y."/>
            <person name="Fuma S."/>
            <person name="Galizzi A."/>
            <person name="Galleron N."/>
            <person name="Ghim S.-Y."/>
            <person name="Glaser P."/>
            <person name="Goffeau A."/>
            <person name="Golightly E.J."/>
            <person name="Grandi G."/>
            <person name="Guiseppi G."/>
            <person name="Guy B.J."/>
            <person name="Haga K."/>
            <person name="Haiech J."/>
            <person name="Harwood C.R."/>
            <person name="Henaut A."/>
            <person name="Hilbert H."/>
            <person name="Holsappel S."/>
            <person name="Hosono S."/>
            <person name="Hullo M.-F."/>
            <person name="Itaya M."/>
            <person name="Jones L.-M."/>
            <person name="Joris B."/>
            <person name="Karamata D."/>
            <person name="Kasahara Y."/>
            <person name="Klaerr-Blanchard M."/>
            <person name="Klein C."/>
            <person name="Kobayashi Y."/>
            <person name="Koetter P."/>
            <person name="Koningstein G."/>
            <person name="Krogh S."/>
            <person name="Kumano M."/>
            <person name="Kurita K."/>
            <person name="Lapidus A."/>
            <person name="Lardinois S."/>
            <person name="Lauber J."/>
            <person name="Lazarevic V."/>
            <person name="Lee S.-M."/>
            <person name="Levine A."/>
            <person name="Liu H."/>
            <person name="Masuda S."/>
            <person name="Mauel C."/>
            <person name="Medigue C."/>
            <person name="Medina N."/>
            <person name="Mellado R.P."/>
            <person name="Mizuno M."/>
            <person name="Moestl D."/>
            <person name="Nakai S."/>
            <person name="Noback M."/>
            <person name="Noone D."/>
            <person name="O'Reilly M."/>
            <person name="Ogawa K."/>
            <person name="Ogiwara A."/>
            <person name="Oudega B."/>
            <person name="Park S.-H."/>
            <person name="Parro V."/>
            <person name="Pohl T.M."/>
            <person name="Portetelle D."/>
            <person name="Porwollik S."/>
            <person name="Prescott A.M."/>
            <person name="Presecan E."/>
            <person name="Pujic P."/>
            <person name="Purnelle B."/>
            <person name="Rapoport G."/>
            <person name="Rey M."/>
            <person name="Reynolds S."/>
            <person name="Rieger M."/>
            <person name="Rivolta C."/>
            <person name="Rocha E."/>
            <person name="Roche B."/>
            <person name="Rose M."/>
            <person name="Sadaie Y."/>
            <person name="Sato T."/>
            <person name="Scanlan E."/>
            <person name="Schleich S."/>
            <person name="Schroeter R."/>
            <person name="Scoffone F."/>
            <person name="Sekiguchi J."/>
            <person name="Sekowska A."/>
            <person name="Seror S.J."/>
            <person name="Serror P."/>
            <person name="Shin B.-S."/>
            <person name="Soldo B."/>
            <person name="Sorokin A."/>
            <person name="Tacconi E."/>
            <person name="Takagi T."/>
            <person name="Takahashi H."/>
            <person name="Takemaru K."/>
            <person name="Takeuchi M."/>
            <person name="Tamakoshi A."/>
            <person name="Tanaka T."/>
            <person name="Terpstra P."/>
            <person name="Tognoni A."/>
            <person name="Tosato V."/>
            <person name="Uchiyama S."/>
            <person name="Vandenbol M."/>
            <person name="Vannier F."/>
            <person name="Vassarotti A."/>
            <person name="Viari A."/>
            <person name="Wambutt R."/>
            <person name="Wedler E."/>
            <person name="Wedler H."/>
            <person name="Weitzenegger T."/>
            <person name="Winters P."/>
            <person name="Wipat A."/>
            <person name="Yamamoto H."/>
            <person name="Yamane K."/>
            <person name="Yasumoto K."/>
            <person name="Yata K."/>
            <person name="Yoshida K."/>
            <person name="Yoshikawa H.-F."/>
            <person name="Zumstein E."/>
            <person name="Yoshikawa H."/>
            <person name="Danchin A."/>
        </authorList>
    </citation>
    <scope>NUCLEOTIDE SEQUENCE [LARGE SCALE GENOMIC DNA]</scope>
    <source>
        <strain>168</strain>
    </source>
</reference>
<reference key="3">
    <citation type="journal article" date="2009" name="Microbiology">
        <title>From a consortium sequence to a unified sequence: the Bacillus subtilis 168 reference genome a decade later.</title>
        <authorList>
            <person name="Barbe V."/>
            <person name="Cruveiller S."/>
            <person name="Kunst F."/>
            <person name="Lenoble P."/>
            <person name="Meurice G."/>
            <person name="Sekowska A."/>
            <person name="Vallenet D."/>
            <person name="Wang T."/>
            <person name="Moszer I."/>
            <person name="Medigue C."/>
            <person name="Danchin A."/>
        </authorList>
    </citation>
    <scope>SEQUENCE REVISION TO 136; 153; 426 AND 513-524</scope>
</reference>
<reference key="4">
    <citation type="journal article" date="1994" name="Microbiology">
        <title>Cloning and nucleotide sequencing of a 15 kb region of the Bacillus subtilis genome containing the iol operon.</title>
        <authorList>
            <person name="Yoshida K."/>
            <person name="Sano H."/>
            <person name="Miwa Y."/>
            <person name="Ogasawara N."/>
            <person name="Fujita Y."/>
        </authorList>
    </citation>
    <scope>NUCLEOTIDE SEQUENCE [GENOMIC DNA] OF 1-404</scope>
    <source>
        <strain>168 / BGSC1A1</strain>
    </source>
</reference>
<reference key="5">
    <citation type="journal article" date="2004" name="Microbiology">
        <title>Characterization of the Bacillus subtilis YxdJ response regulator as the inducer of expression for the cognate ABC transporter YxdLM.</title>
        <authorList>
            <person name="Joseph P."/>
            <person name="Guiseppi A."/>
            <person name="Sorokin A."/>
            <person name="Denizot F."/>
        </authorList>
    </citation>
    <scope>INDUCTION</scope>
    <scope>POSSIBLE FUNCTION</scope>
    <source>
        <strain>168</strain>
    </source>
</reference>
<reference key="6">
    <citation type="journal article" date="2005" name="Microbiology">
        <title>Cationic antimicrobial peptides elicit a complex stress response in Bacillus subtilis that involves ECF-type sigma factors and two-component signal transduction systems.</title>
        <authorList>
            <person name="Pietiaeinen M."/>
            <person name="Gardemeister M."/>
            <person name="Mecklin M."/>
            <person name="Leskelae S."/>
            <person name="Sarvas M."/>
            <person name="Kontinen V.P."/>
        </authorList>
    </citation>
    <scope>INDUCTION BY LL-37</scope>
    <scope>POSSIBLE FUNCTION</scope>
    <source>
        <strain>168</strain>
    </source>
</reference>
<organism>
    <name type="scientific">Bacillus subtilis (strain 168)</name>
    <dbReference type="NCBI Taxonomy" id="224308"/>
    <lineage>
        <taxon>Bacteria</taxon>
        <taxon>Bacillati</taxon>
        <taxon>Bacillota</taxon>
        <taxon>Bacilli</taxon>
        <taxon>Bacillales</taxon>
        <taxon>Bacillaceae</taxon>
        <taxon>Bacillus</taxon>
    </lineage>
</organism>
<dbReference type="EMBL" id="D45912">
    <property type="protein sequence ID" value="BAA08316.1"/>
    <property type="molecule type" value="Genomic_DNA"/>
</dbReference>
<dbReference type="EMBL" id="AL009126">
    <property type="protein sequence ID" value="CAB15999.2"/>
    <property type="molecule type" value="Genomic_DNA"/>
</dbReference>
<dbReference type="EMBL" id="D14399">
    <property type="protein sequence ID" value="BAA03303.1"/>
    <property type="molecule type" value="Genomic_DNA"/>
</dbReference>
<dbReference type="PIR" id="B70074">
    <property type="entry name" value="B70074"/>
</dbReference>
<dbReference type="RefSeq" id="WP_003244410.1">
    <property type="nucleotide sequence ID" value="NZ_OZ025638.1"/>
</dbReference>
<dbReference type="SMR" id="P42424"/>
<dbReference type="FunCoup" id="P42424">
    <property type="interactions" value="187"/>
</dbReference>
<dbReference type="STRING" id="224308.BSU39630"/>
<dbReference type="TCDB" id="3.A.1.134.6">
    <property type="family name" value="the atp-binding cassette (abc) superfamily"/>
</dbReference>
<dbReference type="PaxDb" id="224308-BSU39630"/>
<dbReference type="EnsemblBacteria" id="CAB15999">
    <property type="protein sequence ID" value="CAB15999"/>
    <property type="gene ID" value="BSU_39630"/>
</dbReference>
<dbReference type="GeneID" id="937589"/>
<dbReference type="KEGG" id="bsu:BSU39630"/>
<dbReference type="PATRIC" id="fig|224308.179.peg.4288"/>
<dbReference type="eggNOG" id="COG0577">
    <property type="taxonomic scope" value="Bacteria"/>
</dbReference>
<dbReference type="InParanoid" id="P42424"/>
<dbReference type="OrthoDB" id="1937696at2"/>
<dbReference type="PhylomeDB" id="P42424"/>
<dbReference type="BioCyc" id="BSUB:BSU39630-MONOMER"/>
<dbReference type="Proteomes" id="UP000001570">
    <property type="component" value="Chromosome"/>
</dbReference>
<dbReference type="GO" id="GO:0005886">
    <property type="term" value="C:plasma membrane"/>
    <property type="evidence" value="ECO:0007669"/>
    <property type="project" value="UniProtKB-SubCell"/>
</dbReference>
<dbReference type="GO" id="GO:0055085">
    <property type="term" value="P:transmembrane transport"/>
    <property type="evidence" value="ECO:0007669"/>
    <property type="project" value="InterPro"/>
</dbReference>
<dbReference type="InterPro" id="IPR052536">
    <property type="entry name" value="ABC-4_Integral_Memb_Prot"/>
</dbReference>
<dbReference type="InterPro" id="IPR003838">
    <property type="entry name" value="ABC3_permease_C"/>
</dbReference>
<dbReference type="InterPro" id="IPR027022">
    <property type="entry name" value="ABC_permease_BceB-typ"/>
</dbReference>
<dbReference type="PANTHER" id="PTHR46795">
    <property type="entry name" value="ABC TRANSPORTER PERMEASE-RELATED-RELATED"/>
    <property type="match status" value="1"/>
</dbReference>
<dbReference type="PANTHER" id="PTHR46795:SF2">
    <property type="entry name" value="ABC TRANSPORTER, PERMEASE PROTEIN"/>
    <property type="match status" value="1"/>
</dbReference>
<dbReference type="Pfam" id="PF02687">
    <property type="entry name" value="FtsX"/>
    <property type="match status" value="1"/>
</dbReference>
<dbReference type="PIRSF" id="PIRSF018968">
    <property type="entry name" value="ABC_permease_BceB"/>
    <property type="match status" value="1"/>
</dbReference>